<comment type="function">
    <text evidence="1">Sliding clamp subunit that acts as a moving platform for DNA processing. Responsible for tethering the catalytic subunit of DNA polymerase and other proteins to DNA during high-speed replication.</text>
</comment>
<comment type="subunit">
    <text evidence="1">Homotrimer. The subunits circularize to form a toroid; DNA passes through its center. Replication factor C (RFC) is required to load the toroid on the DNA.</text>
</comment>
<comment type="similarity">
    <text evidence="1">Belongs to the PCNA family.</text>
</comment>
<evidence type="ECO:0000255" key="1">
    <source>
        <dbReference type="HAMAP-Rule" id="MF_00317"/>
    </source>
</evidence>
<accession>P57763</accession>
<sequence length="248" mass="27682">MIKATYSSAKDFYSLLSGLLRVTDEIILNFTEDSIFSRYLTDDKVLMVIFKIPKEYLEDYTIDKPLGIKININDLKKILGKAKTKSATVTLEETEAGLKVTVRDEKTGTRSNIYIKGEKTSIDQLTEPKVNLSVTFTTDGDILKDIARDLSLVGEEVEISADENTVTLSTEEAGRTYKSLLRQDKPLKSLNIESPSKAVYSIEVLKDVFKVTTISQNVTVGFGNNIPMRIEVPTDSGGQLIFWIAPRL</sequence>
<organism>
    <name type="scientific">Sulfurisphaera ohwakuensis</name>
    <dbReference type="NCBI Taxonomy" id="69656"/>
    <lineage>
        <taxon>Archaea</taxon>
        <taxon>Thermoproteota</taxon>
        <taxon>Thermoprotei</taxon>
        <taxon>Sulfolobales</taxon>
        <taxon>Sulfolobaceae</taxon>
        <taxon>Sulfurisphaera</taxon>
    </lineage>
</organism>
<dbReference type="EMBL" id="AB045090">
    <property type="protein sequence ID" value="BAB19662.1"/>
    <property type="molecule type" value="Genomic_DNA"/>
</dbReference>
<dbReference type="RefSeq" id="WP_156013650.1">
    <property type="nucleotide sequence ID" value="NZ_CP045484.1"/>
</dbReference>
<dbReference type="SMR" id="P57763"/>
<dbReference type="GeneID" id="42799922"/>
<dbReference type="OrthoDB" id="14749at2157"/>
<dbReference type="GO" id="GO:0003677">
    <property type="term" value="F:DNA binding"/>
    <property type="evidence" value="ECO:0007669"/>
    <property type="project" value="UniProtKB-UniRule"/>
</dbReference>
<dbReference type="GO" id="GO:0030337">
    <property type="term" value="F:DNA polymerase processivity factor activity"/>
    <property type="evidence" value="ECO:0007669"/>
    <property type="project" value="UniProtKB-UniRule"/>
</dbReference>
<dbReference type="GO" id="GO:0006272">
    <property type="term" value="P:leading strand elongation"/>
    <property type="evidence" value="ECO:0007669"/>
    <property type="project" value="TreeGrafter"/>
</dbReference>
<dbReference type="GO" id="GO:0006275">
    <property type="term" value="P:regulation of DNA replication"/>
    <property type="evidence" value="ECO:0007669"/>
    <property type="project" value="UniProtKB-UniRule"/>
</dbReference>
<dbReference type="CDD" id="cd00577">
    <property type="entry name" value="PCNA"/>
    <property type="match status" value="1"/>
</dbReference>
<dbReference type="Gene3D" id="3.70.10.10">
    <property type="match status" value="1"/>
</dbReference>
<dbReference type="HAMAP" id="MF_00317">
    <property type="entry name" value="DNApol_clamp_arch"/>
    <property type="match status" value="1"/>
</dbReference>
<dbReference type="InterPro" id="IPR046938">
    <property type="entry name" value="DNA_clamp_sf"/>
</dbReference>
<dbReference type="InterPro" id="IPR000730">
    <property type="entry name" value="Pr_cel_nuc_antig"/>
</dbReference>
<dbReference type="InterPro" id="IPR022649">
    <property type="entry name" value="Pr_cel_nuc_antig_C"/>
</dbReference>
<dbReference type="InterPro" id="IPR022648">
    <property type="entry name" value="Pr_cel_nuc_antig_N"/>
</dbReference>
<dbReference type="NCBIfam" id="NF002218">
    <property type="entry name" value="PRK01115.1-1"/>
    <property type="match status" value="1"/>
</dbReference>
<dbReference type="PANTHER" id="PTHR11352">
    <property type="entry name" value="PROLIFERATING CELL NUCLEAR ANTIGEN"/>
    <property type="match status" value="1"/>
</dbReference>
<dbReference type="PANTHER" id="PTHR11352:SF0">
    <property type="entry name" value="PROLIFERATING CELL NUCLEAR ANTIGEN"/>
    <property type="match status" value="1"/>
</dbReference>
<dbReference type="Pfam" id="PF02747">
    <property type="entry name" value="PCNA_C"/>
    <property type="match status" value="1"/>
</dbReference>
<dbReference type="Pfam" id="PF00705">
    <property type="entry name" value="PCNA_N"/>
    <property type="match status" value="1"/>
</dbReference>
<dbReference type="SUPFAM" id="SSF55979">
    <property type="entry name" value="DNA clamp"/>
    <property type="match status" value="2"/>
</dbReference>
<proteinExistence type="inferred from homology"/>
<reference key="1">
    <citation type="journal article" date="2000" name="Extremophiles">
        <title>Phylogenetic analysis of archaeal PCNA homologues.</title>
        <authorList>
            <person name="Iwai T."/>
            <person name="Kurosawa N."/>
            <person name="Itoh Y.H."/>
            <person name="Horiuchi T."/>
        </authorList>
    </citation>
    <scope>NUCLEOTIDE SEQUENCE [GENOMIC DNA]</scope>
    <source>
        <strain>TA-1</strain>
    </source>
</reference>
<keyword id="KW-0235">DNA replication</keyword>
<keyword id="KW-0238">DNA-binding</keyword>
<gene>
    <name evidence="1" type="primary">pcn2</name>
    <name type="synonym">pcnAB</name>
</gene>
<name>PCNA2_SULOH</name>
<protein>
    <recommendedName>
        <fullName evidence="1">DNA polymerase sliding clamp 2</fullName>
    </recommendedName>
    <alternativeName>
        <fullName evidence="1">Proliferating cell nuclear antigen homolog 2</fullName>
        <shortName evidence="1">PCNA 2</shortName>
    </alternativeName>
</protein>
<feature type="chain" id="PRO_0000149213" description="DNA polymerase sliding clamp 2">
    <location>
        <begin position="1"/>
        <end position="248"/>
    </location>
</feature>